<accession>A0B966</accession>
<proteinExistence type="inferred from homology"/>
<feature type="chain" id="PRO_0000331010" description="Glutamate--tRNA ligase">
    <location>
        <begin position="1"/>
        <end position="564"/>
    </location>
</feature>
<feature type="short sequence motif" description="'HIGH' region" evidence="1">
    <location>
        <begin position="107"/>
        <end position="117"/>
    </location>
</feature>
<evidence type="ECO:0000255" key="1">
    <source>
        <dbReference type="HAMAP-Rule" id="MF_02076"/>
    </source>
</evidence>
<gene>
    <name evidence="1" type="primary">gltX</name>
    <name type="ordered locus">Mthe_1466</name>
</gene>
<name>SYE_METTP</name>
<protein>
    <recommendedName>
        <fullName evidence="1">Glutamate--tRNA ligase</fullName>
        <ecNumber evidence="1">6.1.1.17</ecNumber>
    </recommendedName>
    <alternativeName>
        <fullName evidence="1">Glutamyl-tRNA synthetase</fullName>
        <shortName evidence="1">GluRS</shortName>
    </alternativeName>
</protein>
<keyword id="KW-0030">Aminoacyl-tRNA synthetase</keyword>
<keyword id="KW-0067">ATP-binding</keyword>
<keyword id="KW-0963">Cytoplasm</keyword>
<keyword id="KW-0436">Ligase</keyword>
<keyword id="KW-0547">Nucleotide-binding</keyword>
<keyword id="KW-0648">Protein biosynthesis</keyword>
<keyword id="KW-1185">Reference proteome</keyword>
<dbReference type="EC" id="6.1.1.17" evidence="1"/>
<dbReference type="EMBL" id="CP000477">
    <property type="protein sequence ID" value="ABK15240.1"/>
    <property type="molecule type" value="Genomic_DNA"/>
</dbReference>
<dbReference type="RefSeq" id="WP_011696632.1">
    <property type="nucleotide sequence ID" value="NC_008553.1"/>
</dbReference>
<dbReference type="SMR" id="A0B966"/>
<dbReference type="STRING" id="349307.Mthe_1466"/>
<dbReference type="GeneID" id="4461921"/>
<dbReference type="KEGG" id="mtp:Mthe_1466"/>
<dbReference type="HOGENOM" id="CLU_001882_1_3_2"/>
<dbReference type="OrthoDB" id="10470at2157"/>
<dbReference type="Proteomes" id="UP000000674">
    <property type="component" value="Chromosome"/>
</dbReference>
<dbReference type="GO" id="GO:0005829">
    <property type="term" value="C:cytosol"/>
    <property type="evidence" value="ECO:0007669"/>
    <property type="project" value="TreeGrafter"/>
</dbReference>
<dbReference type="GO" id="GO:0005524">
    <property type="term" value="F:ATP binding"/>
    <property type="evidence" value="ECO:0007669"/>
    <property type="project" value="UniProtKB-UniRule"/>
</dbReference>
<dbReference type="GO" id="GO:0004818">
    <property type="term" value="F:glutamate-tRNA ligase activity"/>
    <property type="evidence" value="ECO:0007669"/>
    <property type="project" value="UniProtKB-UniRule"/>
</dbReference>
<dbReference type="GO" id="GO:0043604">
    <property type="term" value="P:amide biosynthetic process"/>
    <property type="evidence" value="ECO:0007669"/>
    <property type="project" value="TreeGrafter"/>
</dbReference>
<dbReference type="GO" id="GO:0006424">
    <property type="term" value="P:glutamyl-tRNA aminoacylation"/>
    <property type="evidence" value="ECO:0007669"/>
    <property type="project" value="UniProtKB-UniRule"/>
</dbReference>
<dbReference type="CDD" id="cd09287">
    <property type="entry name" value="GluRS_non_core"/>
    <property type="match status" value="1"/>
</dbReference>
<dbReference type="FunFam" id="3.40.50.620:FF:000222">
    <property type="entry name" value="Glutamate--tRNA ligase"/>
    <property type="match status" value="1"/>
</dbReference>
<dbReference type="Gene3D" id="2.40.240.100">
    <property type="match status" value="1"/>
</dbReference>
<dbReference type="Gene3D" id="3.40.50.620">
    <property type="entry name" value="HUPs"/>
    <property type="match status" value="1"/>
</dbReference>
<dbReference type="Gene3D" id="2.40.240.10">
    <property type="entry name" value="Ribosomal Protein L25, Chain P"/>
    <property type="match status" value="1"/>
</dbReference>
<dbReference type="HAMAP" id="MF_02076">
    <property type="entry name" value="Glu_tRNA_synth_type2"/>
    <property type="match status" value="1"/>
</dbReference>
<dbReference type="InterPro" id="IPR050132">
    <property type="entry name" value="Gln/Glu-tRNA_Ligase"/>
</dbReference>
<dbReference type="InterPro" id="IPR004526">
    <property type="entry name" value="Glu-tRNA-synth_arc/euk"/>
</dbReference>
<dbReference type="InterPro" id="IPR000924">
    <property type="entry name" value="Glu/Gln-tRNA-synth"/>
</dbReference>
<dbReference type="InterPro" id="IPR020058">
    <property type="entry name" value="Glu/Gln-tRNA-synth_Ib_cat-dom"/>
</dbReference>
<dbReference type="InterPro" id="IPR020059">
    <property type="entry name" value="Glu/Gln-tRNA-synth_Ib_codon-bd"/>
</dbReference>
<dbReference type="InterPro" id="IPR020056">
    <property type="entry name" value="Rbsml_bL25/Gln-tRNA_synth_N"/>
</dbReference>
<dbReference type="InterPro" id="IPR011035">
    <property type="entry name" value="Ribosomal_bL25/Gln-tRNA_synth"/>
</dbReference>
<dbReference type="InterPro" id="IPR014729">
    <property type="entry name" value="Rossmann-like_a/b/a_fold"/>
</dbReference>
<dbReference type="InterPro" id="IPR049437">
    <property type="entry name" value="tRNA-synt_1c_C2"/>
</dbReference>
<dbReference type="NCBIfam" id="TIGR00463">
    <property type="entry name" value="gltX_arch"/>
    <property type="match status" value="1"/>
</dbReference>
<dbReference type="NCBIfam" id="NF003169">
    <property type="entry name" value="PRK04156.1"/>
    <property type="match status" value="1"/>
</dbReference>
<dbReference type="PANTHER" id="PTHR43097:SF5">
    <property type="entry name" value="GLUTAMATE--TRNA LIGASE"/>
    <property type="match status" value="1"/>
</dbReference>
<dbReference type="PANTHER" id="PTHR43097">
    <property type="entry name" value="GLUTAMINE-TRNA LIGASE"/>
    <property type="match status" value="1"/>
</dbReference>
<dbReference type="Pfam" id="PF00749">
    <property type="entry name" value="tRNA-synt_1c"/>
    <property type="match status" value="1"/>
</dbReference>
<dbReference type="Pfam" id="PF03950">
    <property type="entry name" value="tRNA-synt_1c_C"/>
    <property type="match status" value="1"/>
</dbReference>
<dbReference type="Pfam" id="PF20974">
    <property type="entry name" value="tRNA-synt_1c_C2"/>
    <property type="match status" value="1"/>
</dbReference>
<dbReference type="PRINTS" id="PR00987">
    <property type="entry name" value="TRNASYNTHGLU"/>
</dbReference>
<dbReference type="SUPFAM" id="SSF52374">
    <property type="entry name" value="Nucleotidylyl transferase"/>
    <property type="match status" value="1"/>
</dbReference>
<dbReference type="SUPFAM" id="SSF50715">
    <property type="entry name" value="Ribosomal protein L25-like"/>
    <property type="match status" value="1"/>
</dbReference>
<organism>
    <name type="scientific">Methanothrix thermoacetophila (strain DSM 6194 / JCM 14653 / NBRC 101360 / PT)</name>
    <name type="common">Methanosaeta thermophila</name>
    <dbReference type="NCBI Taxonomy" id="349307"/>
    <lineage>
        <taxon>Archaea</taxon>
        <taxon>Methanobacteriati</taxon>
        <taxon>Methanobacteriota</taxon>
        <taxon>Stenosarchaea group</taxon>
        <taxon>Methanomicrobia</taxon>
        <taxon>Methanotrichales</taxon>
        <taxon>Methanotrichaceae</taxon>
        <taxon>Methanothrix</taxon>
    </lineage>
</organism>
<reference key="1">
    <citation type="submission" date="2006-10" db="EMBL/GenBank/DDBJ databases">
        <title>Complete sequence of Methanosaeta thermophila PT.</title>
        <authorList>
            <consortium name="US DOE Joint Genome Institute"/>
            <person name="Copeland A."/>
            <person name="Lucas S."/>
            <person name="Lapidus A."/>
            <person name="Barry K."/>
            <person name="Detter J.C."/>
            <person name="Glavina del Rio T."/>
            <person name="Hammon N."/>
            <person name="Israni S."/>
            <person name="Pitluck S."/>
            <person name="Chain P."/>
            <person name="Malfatti S."/>
            <person name="Shin M."/>
            <person name="Vergez L."/>
            <person name="Schmutz J."/>
            <person name="Larimer F."/>
            <person name="Land M."/>
            <person name="Hauser L."/>
            <person name="Kyrpides N."/>
            <person name="Kim E."/>
            <person name="Smith K.S."/>
            <person name="Ingram-Smith C."/>
            <person name="Richardson P."/>
        </authorList>
    </citation>
    <scope>NUCLEOTIDE SEQUENCE [LARGE SCALE GENOMIC DNA]</scope>
    <source>
        <strain>DSM 6194 / JCM 14653 / NBRC 101360 / PT</strain>
    </source>
</reference>
<sequence length="564" mass="64383">MTEEIRELIEKFALQNAVKYRSAPNHGAVMGKLMGERPDLRPRAREIAPLITSVLNEIERMSPEQWESRLREMAPELIEEISARKEPAKGLQPLEGAEGGVVMRFAPNPNGPPTLGSARGIIINSEYVKMYGGKFILRFDDTDPVNKRPMIEAYDWYIEDCKWLGAEPHEIVAASQRVEKYYEVAEELIRRGGAYVCLCEQTAFKALKDAAMPCPHRDQTVDENMALWNKMLDGSFQEGEAVLRVKTDIKHKDPAMRDWAGFRIVTKSHPLVGERYRVWPLLDFESAVEDHLLGVTHILRGKDLIDSERRQRYLYDHMGWVYPRVLHWGRVKIFQFGAFSTSKLRKAIEAGEYSGWDDPRLPTVRAMRRRGITAEALRKFMIDLGVGETDISISMDSIYAENRRIVDPIANRRFFVWDPVEIEIKGEVPEVAEAPLHPTIDRGTRRIRAGGRLLLCKEDVAGLAPGSRIRLKDLCNIEIKEIFPLRAELIDLSPETAKRLKLRIIHWAPVEGIPVRVLGPDKTDTGIGEHGISDELDRIVQFERYGFVRIDSVGEEVVAYFAHR</sequence>
<comment type="function">
    <text evidence="1">Catalyzes the attachment of glutamate to tRNA(Glu) in a two-step reaction: glutamate is first activated by ATP to form Glu-AMP and then transferred to the acceptor end of tRNA(Glu).</text>
</comment>
<comment type="catalytic activity">
    <reaction evidence="1">
        <text>tRNA(Glu) + L-glutamate + ATP = L-glutamyl-tRNA(Glu) + AMP + diphosphate</text>
        <dbReference type="Rhea" id="RHEA:23540"/>
        <dbReference type="Rhea" id="RHEA-COMP:9663"/>
        <dbReference type="Rhea" id="RHEA-COMP:9680"/>
        <dbReference type="ChEBI" id="CHEBI:29985"/>
        <dbReference type="ChEBI" id="CHEBI:30616"/>
        <dbReference type="ChEBI" id="CHEBI:33019"/>
        <dbReference type="ChEBI" id="CHEBI:78442"/>
        <dbReference type="ChEBI" id="CHEBI:78520"/>
        <dbReference type="ChEBI" id="CHEBI:456215"/>
        <dbReference type="EC" id="6.1.1.17"/>
    </reaction>
</comment>
<comment type="subcellular location">
    <subcellularLocation>
        <location evidence="1">Cytoplasm</location>
    </subcellularLocation>
</comment>
<comment type="similarity">
    <text evidence="1">Belongs to the class-I aminoacyl-tRNA synthetase family. Glutamate--tRNA ligase type 2 subfamily.</text>
</comment>